<evidence type="ECO:0000250" key="1"/>
<evidence type="ECO:0000305" key="2"/>
<gene>
    <name type="primary">hisA</name>
    <name type="ordered locus">BSU34880</name>
</gene>
<feature type="chain" id="PRO_0000141978" description="1-(5-phosphoribosyl)-5-[(5-phosphoribosylamino)methylideneamino] imidazole-4-carboxamide isomerase">
    <location>
        <begin position="1"/>
        <end position="245"/>
    </location>
</feature>
<feature type="active site" description="Proton acceptor" evidence="1">
    <location>
        <position position="11"/>
    </location>
</feature>
<feature type="active site" description="Proton donor" evidence="1">
    <location>
        <position position="132"/>
    </location>
</feature>
<dbReference type="EC" id="5.3.1.16"/>
<dbReference type="EMBL" id="AF017113">
    <property type="protein sequence ID" value="AAC67298.1"/>
    <property type="molecule type" value="Genomic_DNA"/>
</dbReference>
<dbReference type="EMBL" id="AL009126">
    <property type="protein sequence ID" value="CAB15493.1"/>
    <property type="molecule type" value="Genomic_DNA"/>
</dbReference>
<dbReference type="PIR" id="F69640">
    <property type="entry name" value="F69640"/>
</dbReference>
<dbReference type="RefSeq" id="NP_391368.1">
    <property type="nucleotide sequence ID" value="NC_000964.3"/>
</dbReference>
<dbReference type="RefSeq" id="WP_003242559.1">
    <property type="nucleotide sequence ID" value="NZ_OZ025638.1"/>
</dbReference>
<dbReference type="SMR" id="O35006"/>
<dbReference type="FunCoup" id="O35006">
    <property type="interactions" value="437"/>
</dbReference>
<dbReference type="STRING" id="224308.BSU34880"/>
<dbReference type="PaxDb" id="224308-BSU34880"/>
<dbReference type="EnsemblBacteria" id="CAB15493">
    <property type="protein sequence ID" value="CAB15493"/>
    <property type="gene ID" value="BSU_34880"/>
</dbReference>
<dbReference type="GeneID" id="936580"/>
<dbReference type="KEGG" id="bsu:BSU34880"/>
<dbReference type="PATRIC" id="fig|224308.179.peg.3776"/>
<dbReference type="eggNOG" id="COG0106">
    <property type="taxonomic scope" value="Bacteria"/>
</dbReference>
<dbReference type="InParanoid" id="O35006"/>
<dbReference type="OrthoDB" id="9807749at2"/>
<dbReference type="PhylomeDB" id="O35006"/>
<dbReference type="BioCyc" id="BSUB:BSU34880-MONOMER"/>
<dbReference type="UniPathway" id="UPA00031">
    <property type="reaction ID" value="UER00009"/>
</dbReference>
<dbReference type="Proteomes" id="UP000001570">
    <property type="component" value="Chromosome"/>
</dbReference>
<dbReference type="GO" id="GO:0005737">
    <property type="term" value="C:cytoplasm"/>
    <property type="evidence" value="ECO:0000318"/>
    <property type="project" value="GO_Central"/>
</dbReference>
<dbReference type="GO" id="GO:0003949">
    <property type="term" value="F:1-(5-phosphoribosyl)-5-[(5-phosphoribosylamino)methylideneamino]imidazole-4-carboxamide isomerase activity"/>
    <property type="evidence" value="ECO:0000318"/>
    <property type="project" value="GO_Central"/>
</dbReference>
<dbReference type="GO" id="GO:0000105">
    <property type="term" value="P:L-histidine biosynthetic process"/>
    <property type="evidence" value="ECO:0000318"/>
    <property type="project" value="GO_Central"/>
</dbReference>
<dbReference type="CDD" id="cd04732">
    <property type="entry name" value="HisA"/>
    <property type="match status" value="1"/>
</dbReference>
<dbReference type="FunFam" id="3.20.20.70:FF:000009">
    <property type="entry name" value="1-(5-phosphoribosyl)-5-[(5-phosphoribosylamino)methylideneamino] imidazole-4-carboxamide isomerase"/>
    <property type="match status" value="1"/>
</dbReference>
<dbReference type="Gene3D" id="3.20.20.70">
    <property type="entry name" value="Aldolase class I"/>
    <property type="match status" value="1"/>
</dbReference>
<dbReference type="HAMAP" id="MF_01014">
    <property type="entry name" value="HisA"/>
    <property type="match status" value="1"/>
</dbReference>
<dbReference type="InterPro" id="IPR013785">
    <property type="entry name" value="Aldolase_TIM"/>
</dbReference>
<dbReference type="InterPro" id="IPR006062">
    <property type="entry name" value="His_biosynth"/>
</dbReference>
<dbReference type="InterPro" id="IPR006063">
    <property type="entry name" value="HisA_bact_arch"/>
</dbReference>
<dbReference type="InterPro" id="IPR044524">
    <property type="entry name" value="Isoase_HisA-like"/>
</dbReference>
<dbReference type="InterPro" id="IPR023016">
    <property type="entry name" value="Isoase_HisA-like_bact"/>
</dbReference>
<dbReference type="InterPro" id="IPR011060">
    <property type="entry name" value="RibuloseP-bd_barrel"/>
</dbReference>
<dbReference type="NCBIfam" id="TIGR00007">
    <property type="entry name" value="1-(5-phosphoribosyl)-5-[(5-phosphoribosylamino)methylideneamino]imidazole-4-carboxamide isomerase"/>
    <property type="match status" value="1"/>
</dbReference>
<dbReference type="PANTHER" id="PTHR43090">
    <property type="entry name" value="1-(5-PHOSPHORIBOSYL)-5-[(5-PHOSPHORIBOSYLAMINO)METHYLIDENEAMINO] IMIDAZOLE-4-CARBOXAMIDE ISOMERASE"/>
    <property type="match status" value="1"/>
</dbReference>
<dbReference type="PANTHER" id="PTHR43090:SF2">
    <property type="entry name" value="1-(5-PHOSPHORIBOSYL)-5-[(5-PHOSPHORIBOSYLAMINO)METHYLIDENEAMINO] IMIDAZOLE-4-CARBOXAMIDE ISOMERASE"/>
    <property type="match status" value="1"/>
</dbReference>
<dbReference type="Pfam" id="PF00977">
    <property type="entry name" value="His_biosynth"/>
    <property type="match status" value="1"/>
</dbReference>
<dbReference type="SUPFAM" id="SSF51366">
    <property type="entry name" value="Ribulose-phoshate binding barrel"/>
    <property type="match status" value="1"/>
</dbReference>
<comment type="catalytic activity">
    <reaction>
        <text>1-(5-phospho-beta-D-ribosyl)-5-[(5-phospho-beta-D-ribosylamino)methylideneamino]imidazole-4-carboxamide = 5-[(5-phospho-1-deoxy-D-ribulos-1-ylimino)methylamino]-1-(5-phospho-beta-D-ribosyl)imidazole-4-carboxamide</text>
        <dbReference type="Rhea" id="RHEA:15469"/>
        <dbReference type="ChEBI" id="CHEBI:58435"/>
        <dbReference type="ChEBI" id="CHEBI:58525"/>
        <dbReference type="EC" id="5.3.1.16"/>
    </reaction>
</comment>
<comment type="pathway">
    <text>Amino-acid biosynthesis; L-histidine biosynthesis; L-histidine from 5-phospho-alpha-D-ribose 1-diphosphate: step 4/9.</text>
</comment>
<comment type="subcellular location">
    <subcellularLocation>
        <location evidence="1">Cytoplasm</location>
    </subcellularLocation>
</comment>
<comment type="similarity">
    <text evidence="2">Belongs to the HisA/HisF family.</text>
</comment>
<reference key="1">
    <citation type="submission" date="1997-08" db="EMBL/GenBank/DDBJ databases">
        <title>Nucleotide sequence of the 300-304 chromosomal segment of Bacillus subtilis.</title>
        <authorList>
            <person name="Lazarevic V."/>
            <person name="Soldo B."/>
            <person name="Rivolta C."/>
            <person name="Reynolds S."/>
            <person name="Mauel C."/>
            <person name="Karamata D."/>
        </authorList>
    </citation>
    <scope>NUCLEOTIDE SEQUENCE [GENOMIC DNA]</scope>
</reference>
<reference key="2">
    <citation type="journal article" date="1997" name="Nature">
        <title>The complete genome sequence of the Gram-positive bacterium Bacillus subtilis.</title>
        <authorList>
            <person name="Kunst F."/>
            <person name="Ogasawara N."/>
            <person name="Moszer I."/>
            <person name="Albertini A.M."/>
            <person name="Alloni G."/>
            <person name="Azevedo V."/>
            <person name="Bertero M.G."/>
            <person name="Bessieres P."/>
            <person name="Bolotin A."/>
            <person name="Borchert S."/>
            <person name="Borriss R."/>
            <person name="Boursier L."/>
            <person name="Brans A."/>
            <person name="Braun M."/>
            <person name="Brignell S.C."/>
            <person name="Bron S."/>
            <person name="Brouillet S."/>
            <person name="Bruschi C.V."/>
            <person name="Caldwell B."/>
            <person name="Capuano V."/>
            <person name="Carter N.M."/>
            <person name="Choi S.-K."/>
            <person name="Codani J.-J."/>
            <person name="Connerton I.F."/>
            <person name="Cummings N.J."/>
            <person name="Daniel R.A."/>
            <person name="Denizot F."/>
            <person name="Devine K.M."/>
            <person name="Duesterhoeft A."/>
            <person name="Ehrlich S.D."/>
            <person name="Emmerson P.T."/>
            <person name="Entian K.-D."/>
            <person name="Errington J."/>
            <person name="Fabret C."/>
            <person name="Ferrari E."/>
            <person name="Foulger D."/>
            <person name="Fritz C."/>
            <person name="Fujita M."/>
            <person name="Fujita Y."/>
            <person name="Fuma S."/>
            <person name="Galizzi A."/>
            <person name="Galleron N."/>
            <person name="Ghim S.-Y."/>
            <person name="Glaser P."/>
            <person name="Goffeau A."/>
            <person name="Golightly E.J."/>
            <person name="Grandi G."/>
            <person name="Guiseppi G."/>
            <person name="Guy B.J."/>
            <person name="Haga K."/>
            <person name="Haiech J."/>
            <person name="Harwood C.R."/>
            <person name="Henaut A."/>
            <person name="Hilbert H."/>
            <person name="Holsappel S."/>
            <person name="Hosono S."/>
            <person name="Hullo M.-F."/>
            <person name="Itaya M."/>
            <person name="Jones L.-M."/>
            <person name="Joris B."/>
            <person name="Karamata D."/>
            <person name="Kasahara Y."/>
            <person name="Klaerr-Blanchard M."/>
            <person name="Klein C."/>
            <person name="Kobayashi Y."/>
            <person name="Koetter P."/>
            <person name="Koningstein G."/>
            <person name="Krogh S."/>
            <person name="Kumano M."/>
            <person name="Kurita K."/>
            <person name="Lapidus A."/>
            <person name="Lardinois S."/>
            <person name="Lauber J."/>
            <person name="Lazarevic V."/>
            <person name="Lee S.-M."/>
            <person name="Levine A."/>
            <person name="Liu H."/>
            <person name="Masuda S."/>
            <person name="Mauel C."/>
            <person name="Medigue C."/>
            <person name="Medina N."/>
            <person name="Mellado R.P."/>
            <person name="Mizuno M."/>
            <person name="Moestl D."/>
            <person name="Nakai S."/>
            <person name="Noback M."/>
            <person name="Noone D."/>
            <person name="O'Reilly M."/>
            <person name="Ogawa K."/>
            <person name="Ogiwara A."/>
            <person name="Oudega B."/>
            <person name="Park S.-H."/>
            <person name="Parro V."/>
            <person name="Pohl T.M."/>
            <person name="Portetelle D."/>
            <person name="Porwollik S."/>
            <person name="Prescott A.M."/>
            <person name="Presecan E."/>
            <person name="Pujic P."/>
            <person name="Purnelle B."/>
            <person name="Rapoport G."/>
            <person name="Rey M."/>
            <person name="Reynolds S."/>
            <person name="Rieger M."/>
            <person name="Rivolta C."/>
            <person name="Rocha E."/>
            <person name="Roche B."/>
            <person name="Rose M."/>
            <person name="Sadaie Y."/>
            <person name="Sato T."/>
            <person name="Scanlan E."/>
            <person name="Schleich S."/>
            <person name="Schroeter R."/>
            <person name="Scoffone F."/>
            <person name="Sekiguchi J."/>
            <person name="Sekowska A."/>
            <person name="Seror S.J."/>
            <person name="Serror P."/>
            <person name="Shin B.-S."/>
            <person name="Soldo B."/>
            <person name="Sorokin A."/>
            <person name="Tacconi E."/>
            <person name="Takagi T."/>
            <person name="Takahashi H."/>
            <person name="Takemaru K."/>
            <person name="Takeuchi M."/>
            <person name="Tamakoshi A."/>
            <person name="Tanaka T."/>
            <person name="Terpstra P."/>
            <person name="Tognoni A."/>
            <person name="Tosato V."/>
            <person name="Uchiyama S."/>
            <person name="Vandenbol M."/>
            <person name="Vannier F."/>
            <person name="Vassarotti A."/>
            <person name="Viari A."/>
            <person name="Wambutt R."/>
            <person name="Wedler E."/>
            <person name="Wedler H."/>
            <person name="Weitzenegger T."/>
            <person name="Winters P."/>
            <person name="Wipat A."/>
            <person name="Yamamoto H."/>
            <person name="Yamane K."/>
            <person name="Yasumoto K."/>
            <person name="Yata K."/>
            <person name="Yoshida K."/>
            <person name="Yoshikawa H.-F."/>
            <person name="Zumstein E."/>
            <person name="Yoshikawa H."/>
            <person name="Danchin A."/>
        </authorList>
    </citation>
    <scope>NUCLEOTIDE SEQUENCE [LARGE SCALE GENOMIC DNA]</scope>
    <source>
        <strain>168</strain>
    </source>
</reference>
<proteinExistence type="inferred from homology"/>
<accession>O35006</accession>
<organism>
    <name type="scientific">Bacillus subtilis (strain 168)</name>
    <dbReference type="NCBI Taxonomy" id="224308"/>
    <lineage>
        <taxon>Bacteria</taxon>
        <taxon>Bacillati</taxon>
        <taxon>Bacillota</taxon>
        <taxon>Bacilli</taxon>
        <taxon>Bacillales</taxon>
        <taxon>Bacillaceae</taxon>
        <taxon>Bacillus</taxon>
    </lineage>
</organism>
<keyword id="KW-0028">Amino-acid biosynthesis</keyword>
<keyword id="KW-0963">Cytoplasm</keyword>
<keyword id="KW-0368">Histidine biosynthesis</keyword>
<keyword id="KW-0413">Isomerase</keyword>
<keyword id="KW-1185">Reference proteome</keyword>
<name>HIS4_BACSU</name>
<sequence length="245" mass="26529">MSAFTLYPAIDMRNGKCVRLVQGDYNKETIYGDSPYDMAELFEKEGAEWIHLVDLDGAKEGKRVNDRHVIEIAQKLNLKVEIGGGIRSENDVYEYLSAGVERVILGSSAVSNPPFVKKMLKQYGEKIAIGLDARNGFVSTEGWLETSTLKATELGKELANEGAEVFIFTDIATDGMLSGPNVKSTVELAKETGKSVIASGGVSSVADLEALARNEADGVSGAIIGKALYTNQFTLSEALERVKRK</sequence>
<protein>
    <recommendedName>
        <fullName>1-(5-phosphoribosyl)-5-[(5-phosphoribosylamino)methylideneamino] imidazole-4-carboxamide isomerase</fullName>
        <ecNumber>5.3.1.16</ecNumber>
    </recommendedName>
    <alternativeName>
        <fullName>Phosphoribosylformimino-5-aminoimidazole carboxamide ribotide isomerase</fullName>
    </alternativeName>
</protein>